<reference key="1">
    <citation type="journal article" date="1986" name="FEBS Lett.">
        <title>Pig kidney Na+,K+-ATPase. Primary structure and spatial organization.</title>
        <authorList>
            <person name="Ovchinnikov Y.A."/>
            <person name="Modyanov N.N."/>
            <person name="Broude N.E."/>
            <person name="Petrukhin K.E."/>
            <person name="Grishin A.V."/>
            <person name="Arzamazova N.M."/>
            <person name="Aldanova N.A."/>
            <person name="Monastyrskaya G.S."/>
            <person name="Sverdlov E.D."/>
        </authorList>
    </citation>
    <scope>NUCLEOTIDE SEQUENCE [MRNA]</scope>
</reference>
<reference key="2">
    <citation type="journal article" date="1986" name="Dokl. Biochem.">
        <title>Nucleotide sequence of cDNA and primary structure of the beta-subunit of Na+,K+-ATPase from pig kidneys.</title>
        <authorList>
            <person name="Ovchinnikov Y.A."/>
            <person name="Broude N.E."/>
            <person name="Petrukhin K.E."/>
            <person name="Grishin A.V."/>
            <person name="Kiyatkin N.I."/>
            <person name="Arzamazova N.M."/>
            <person name="Gevondyan N.M."/>
            <person name="Chertova E.N."/>
            <person name="Melkov A.M."/>
            <person name="Smirnov Y.V."/>
            <person name="Malyshev I.V."/>
            <person name="Monastyrskaya G.S."/>
            <person name="Modyanov N.N."/>
        </authorList>
    </citation>
    <scope>NUCLEOTIDE SEQUENCE [MRNA]</scope>
    <source>
        <tissue>Kidney</tissue>
    </source>
</reference>
<reference key="3">
    <citation type="journal article" date="1987" name="Bioorg. Khim.">
        <title>Primary structure of the beta-subunit of Na+,K+-ATPase from the swine kidney. II. Reverse transcription, cloning of mRNA, complete nucleotide sequence corresponding to the structural region of the gene.</title>
        <authorList>
            <person name="Broude N.E."/>
            <person name="Monastyrskaya G.S."/>
            <person name="Petrukhin K.E."/>
            <person name="Grishin A.V."/>
            <person name="Kiyatkin N.I."/>
            <person name="Melkov A.M."/>
            <person name="Smirnov Y.V."/>
            <person name="Sverdiov V.E."/>
            <person name="Malyshev I.V."/>
            <person name="Modyanov N.N."/>
        </authorList>
    </citation>
    <scope>NUCLEOTIDE SEQUENCE [MRNA]</scope>
</reference>
<reference key="4">
    <citation type="journal article" date="1987" name="FEBS Lett.">
        <title>Detailed structural analysis of exposed domains of membrane-bound Na+,K+-ATPase. A model of transmembrane arrangement.</title>
        <authorList>
            <person name="Ovchinnikov Y.A."/>
            <person name="Arzamazova N.M."/>
            <person name="Arystarkhova E.A."/>
            <person name="Gevondyan N.M."/>
            <person name="Aldanova N.A."/>
            <person name="Modyanov N.N."/>
        </authorList>
    </citation>
    <scope>TOPOLOGY</scope>
</reference>
<protein>
    <recommendedName>
        <fullName>Sodium/potassium-transporting ATPase subunit beta-1</fullName>
    </recommendedName>
    <alternativeName>
        <fullName>Sodium/potassium-dependent ATPase subunit beta-1</fullName>
    </alternativeName>
</protein>
<evidence type="ECO:0000250" key="1"/>
<evidence type="ECO:0000250" key="2">
    <source>
        <dbReference type="UniProtKB" id="P05026"/>
    </source>
</evidence>
<evidence type="ECO:0000250" key="3">
    <source>
        <dbReference type="UniProtKB" id="P07340"/>
    </source>
</evidence>
<evidence type="ECO:0000250" key="4">
    <source>
        <dbReference type="UniProtKB" id="P14094"/>
    </source>
</evidence>
<evidence type="ECO:0000255" key="5"/>
<evidence type="ECO:0000305" key="6"/>
<evidence type="ECO:0007829" key="7">
    <source>
        <dbReference type="PDB" id="3B8E"/>
    </source>
</evidence>
<evidence type="ECO:0007829" key="8">
    <source>
        <dbReference type="PDB" id="3KDP"/>
    </source>
</evidence>
<evidence type="ECO:0007829" key="9">
    <source>
        <dbReference type="PDB" id="3WGU"/>
    </source>
</evidence>
<evidence type="ECO:0007829" key="10">
    <source>
        <dbReference type="PDB" id="4HYT"/>
    </source>
</evidence>
<evidence type="ECO:0007829" key="11">
    <source>
        <dbReference type="PDB" id="8JBK"/>
    </source>
</evidence>
<evidence type="ECO:0007829" key="12">
    <source>
        <dbReference type="PDB" id="8JBM"/>
    </source>
</evidence>
<gene>
    <name type="primary">ATP1B1</name>
</gene>
<comment type="function">
    <text evidence="2">This is the non-catalytic component of the active enzyme, which catalyzes the hydrolysis of ATP coupled with the exchange of Na(+) and K(+) ions across the plasma membrane. The beta subunit regulates, through assembly of alpha/beta heterodimers, the number of sodium pumps transported to the plasma membrane. Plays a role in innate immunity by enhancing virus-triggered induction of interferons (IFNs) and interferon stimulated genes (ISGs). Mechanistically, enhances the ubiquitination of TRAF3 and TRAF6 as well as the phosphorylation of TAK1 and TBK1.</text>
</comment>
<comment type="function">
    <text evidence="2">Involved in cell adhesion and establishing epithelial cell polarity.</text>
</comment>
<comment type="subunit">
    <text evidence="2 3 4">The sodium/potassium-transporting ATPase is composed of a catalytic alpha subunit, an auxiliary non-catalytic beta subunit and an additional regulatory subunit. Interacts with catalytic subunit ATP12A (By similarity). Interacts with regulatory subunit FXYD1 (By similarity). Interacts with regulatory subunit FXYD3 (By similarity). Interacts with NKAIN1, NKAIN2 and NKAIN4 (By similarity). Interacts with MLC1. Part of a complex containing MLC1, TRPV4, AQP4 and HEPACAM. Interacts with KIRREL3 (By similarity). Interacts with OBSCN (via protein kinase domain 1) (By similarity). Interacts with TRAF3 and TRAF6 (By similarity).</text>
</comment>
<comment type="interaction">
    <interactant intactId="EBI-9014008">
        <id>P05027</id>
    </interactant>
    <interactant intactId="EBI-9014019">
        <id>P05024</id>
        <label>ATP1A1</label>
    </interactant>
    <organismsDiffer>false</organismsDiffer>
    <experiments>3</experiments>
</comment>
<comment type="subcellular location">
    <subcellularLocation>
        <location evidence="5">Cell membrane</location>
        <topology evidence="5">Single-pass type II membrane protein</topology>
    </subcellularLocation>
    <subcellularLocation>
        <location evidence="3">Apical cell membrane</location>
        <topology evidence="5">Single-pass type II membrane protein</topology>
    </subcellularLocation>
    <subcellularLocation>
        <location evidence="4">Cell membrane</location>
        <location evidence="4">Sarcolemma</location>
    </subcellularLocation>
    <text evidence="4">Colocalizes with OBSCN at the intercalated disk and sarcolemma in cardiomyocytes. Localizes in long striations at the level of Z and M lines.</text>
</comment>
<comment type="domain">
    <text evidence="1">The C-terminal lobe folds into an immunoglobulin-like domain and mediates cell adhesion properties.</text>
</comment>
<comment type="PTM">
    <text evidence="3 4">Glutathionylated (By similarity). N-glycosylated (By similarity).</text>
</comment>
<comment type="similarity">
    <text evidence="6">Belongs to the X(+)/potassium ATPases subunit beta family.</text>
</comment>
<feature type="chain" id="PRO_0000219099" description="Sodium/potassium-transporting ATPase subunit beta-1">
    <location>
        <begin position="1"/>
        <end position="303"/>
    </location>
</feature>
<feature type="topological domain" description="Cytoplasmic" evidence="5">
    <location>
        <begin position="1"/>
        <end position="34"/>
    </location>
</feature>
<feature type="transmembrane region" description="Helical; Signal-anchor for type II membrane protein" evidence="5">
    <location>
        <begin position="35"/>
        <end position="62"/>
    </location>
</feature>
<feature type="topological domain" description="Extracellular" evidence="5">
    <location>
        <begin position="63"/>
        <end position="303"/>
    </location>
</feature>
<feature type="region of interest" description="immunoglobulin-like" evidence="1">
    <location>
        <begin position="191"/>
        <end position="303"/>
    </location>
</feature>
<feature type="modified residue" description="Phosphoserine" evidence="3">
    <location>
        <position position="11"/>
    </location>
</feature>
<feature type="modified residue" description="Phosphotyrosine" evidence="4">
    <location>
        <position position="101"/>
    </location>
</feature>
<feature type="glycosylation site" description="N-linked (GlcNAc...) asparagine" evidence="1">
    <location>
        <position position="158"/>
    </location>
</feature>
<feature type="glycosylation site" description="N-linked (GlcNAc...) asparagine" evidence="1">
    <location>
        <position position="193"/>
    </location>
</feature>
<feature type="glycosylation site" description="N-linked (GlcNAc...) asparagine" evidence="1">
    <location>
        <position position="265"/>
    </location>
</feature>
<feature type="disulfide bond" evidence="1">
    <location>
        <begin position="126"/>
        <end position="149"/>
    </location>
</feature>
<feature type="disulfide bond" evidence="1">
    <location>
        <begin position="159"/>
        <end position="175"/>
    </location>
</feature>
<feature type="disulfide bond" evidence="1">
    <location>
        <begin position="213"/>
        <end position="276"/>
    </location>
</feature>
<feature type="sequence conflict" description="In Ref. 3; AAA31001." evidence="6" ref="3">
    <original>FI</original>
    <variation>LM</variation>
    <location>
        <begin position="15"/>
        <end position="16"/>
    </location>
</feature>
<feature type="sequence conflict" description="In Ref. 1; CAA27575." evidence="6" ref="1">
    <original>F</original>
    <variation>S</variation>
    <location>
        <position position="151"/>
    </location>
</feature>
<feature type="sequence conflict" description="In Ref. 3; AAA31001." evidence="6" ref="3">
    <original>C</original>
    <variation>S</variation>
    <location>
        <position position="159"/>
    </location>
</feature>
<feature type="helix" evidence="9">
    <location>
        <begin position="12"/>
        <end position="15"/>
    </location>
</feature>
<feature type="strand" evidence="9">
    <location>
        <begin position="19"/>
        <end position="21"/>
    </location>
</feature>
<feature type="strand" evidence="10">
    <location>
        <begin position="24"/>
        <end position="27"/>
    </location>
</feature>
<feature type="helix" evidence="9">
    <location>
        <begin position="31"/>
        <end position="58"/>
    </location>
</feature>
<feature type="turn" evidence="7">
    <location>
        <begin position="59"/>
        <end position="61"/>
    </location>
</feature>
<feature type="strand" evidence="12">
    <location>
        <begin position="63"/>
        <end position="65"/>
    </location>
</feature>
<feature type="helix" evidence="11">
    <location>
        <begin position="70"/>
        <end position="72"/>
    </location>
</feature>
<feature type="strand" evidence="9">
    <location>
        <begin position="77"/>
        <end position="81"/>
    </location>
</feature>
<feature type="strand" evidence="9">
    <location>
        <begin position="84"/>
        <end position="89"/>
    </location>
</feature>
<feature type="helix" evidence="9">
    <location>
        <begin position="96"/>
        <end position="98"/>
    </location>
</feature>
<feature type="helix" evidence="9">
    <location>
        <begin position="99"/>
        <end position="109"/>
    </location>
</feature>
<feature type="helix" evidence="11">
    <location>
        <begin position="110"/>
        <end position="112"/>
    </location>
</feature>
<feature type="turn" evidence="9">
    <location>
        <begin position="114"/>
        <end position="116"/>
    </location>
</feature>
<feature type="turn" evidence="9">
    <location>
        <begin position="120"/>
        <end position="122"/>
    </location>
</feature>
<feature type="strand" evidence="9">
    <location>
        <begin position="139"/>
        <end position="143"/>
    </location>
</feature>
<feature type="turn" evidence="9">
    <location>
        <begin position="153"/>
        <end position="155"/>
    </location>
</feature>
<feature type="strand" evidence="11">
    <location>
        <begin position="156"/>
        <end position="158"/>
    </location>
</feature>
<feature type="strand" evidence="11">
    <location>
        <begin position="160"/>
        <end position="163"/>
    </location>
</feature>
<feature type="strand" evidence="9">
    <location>
        <begin position="164"/>
        <end position="166"/>
    </location>
</feature>
<feature type="strand" evidence="9">
    <location>
        <begin position="171"/>
        <end position="173"/>
    </location>
</feature>
<feature type="strand" evidence="9">
    <location>
        <begin position="175"/>
        <end position="180"/>
    </location>
</feature>
<feature type="strand" evidence="9">
    <location>
        <begin position="193"/>
        <end position="195"/>
    </location>
</feature>
<feature type="strand" evidence="11">
    <location>
        <begin position="197"/>
        <end position="199"/>
    </location>
</feature>
<feature type="strand" evidence="8">
    <location>
        <begin position="200"/>
        <end position="202"/>
    </location>
</feature>
<feature type="turn" evidence="9">
    <location>
        <begin position="205"/>
        <end position="207"/>
    </location>
</feature>
<feature type="strand" evidence="9">
    <location>
        <begin position="208"/>
        <end position="213"/>
    </location>
</feature>
<feature type="strand" evidence="9">
    <location>
        <begin position="215"/>
        <end position="220"/>
    </location>
</feature>
<feature type="strand" evidence="11">
    <location>
        <begin position="226"/>
        <end position="230"/>
    </location>
</feature>
<feature type="helix" evidence="9">
    <location>
        <begin position="232"/>
        <end position="234"/>
    </location>
</feature>
<feature type="strand" evidence="9">
    <location>
        <begin position="236"/>
        <end position="239"/>
    </location>
</feature>
<feature type="helix" evidence="9">
    <location>
        <begin position="240"/>
        <end position="242"/>
    </location>
</feature>
<feature type="helix" evidence="9">
    <location>
        <begin position="247"/>
        <end position="250"/>
    </location>
</feature>
<feature type="strand" evidence="9">
    <location>
        <begin position="258"/>
        <end position="262"/>
    </location>
</feature>
<feature type="strand" evidence="9">
    <location>
        <begin position="269"/>
        <end position="274"/>
    </location>
</feature>
<feature type="strand" evidence="9">
    <location>
        <begin position="276"/>
        <end position="278"/>
    </location>
</feature>
<feature type="strand" evidence="9">
    <location>
        <begin position="280"/>
        <end position="282"/>
    </location>
</feature>
<feature type="strand" evidence="9">
    <location>
        <begin position="292"/>
        <end position="294"/>
    </location>
</feature>
<feature type="strand" evidence="9">
    <location>
        <begin position="297"/>
        <end position="300"/>
    </location>
</feature>
<sequence>MARGKAKEEGSWKKFIWNSEKKEFLGRTGGSWFKILLFYVIFYGCLAGIFIGTIQVMLLTISEFKPTYQDRVAPPGLTQIPQSQKTEISFRPNDPQSYESYVVSIVRFLEKYKDLAQKDDMIFEDCGNVPSELKERGEYNNERGERKVCRFRLEWLGNCSGLNDETYGYKDGKPCVIIKLNRVLGFKPKPPKNESLETYPVMKYNPYVLPVHCTGKRDEDKEKVGTMEYFGLGGYPGFPLQYYPYYGKLLQPKYLQPLMAVQFTNLTMDTEIRIECKAYGENIGYSEKDRFQGRFDVKIEVKS</sequence>
<name>AT1B1_PIG</name>
<keyword id="KW-0002">3D-structure</keyword>
<keyword id="KW-0130">Cell adhesion</keyword>
<keyword id="KW-1003">Cell membrane</keyword>
<keyword id="KW-1015">Disulfide bond</keyword>
<keyword id="KW-0318">Glutathionylation</keyword>
<keyword id="KW-0325">Glycoprotein</keyword>
<keyword id="KW-0391">Immunity</keyword>
<keyword id="KW-0399">Innate immunity</keyword>
<keyword id="KW-0406">Ion transport</keyword>
<keyword id="KW-0472">Membrane</keyword>
<keyword id="KW-0597">Phosphoprotein</keyword>
<keyword id="KW-0630">Potassium</keyword>
<keyword id="KW-0633">Potassium transport</keyword>
<keyword id="KW-1185">Reference proteome</keyword>
<keyword id="KW-0735">Signal-anchor</keyword>
<keyword id="KW-0915">Sodium</keyword>
<keyword id="KW-0739">Sodium transport</keyword>
<keyword id="KW-0740">Sodium/potassium transport</keyword>
<keyword id="KW-0812">Transmembrane</keyword>
<keyword id="KW-1133">Transmembrane helix</keyword>
<keyword id="KW-0813">Transport</keyword>
<organism>
    <name type="scientific">Sus scrofa</name>
    <name type="common">Pig</name>
    <dbReference type="NCBI Taxonomy" id="9823"/>
    <lineage>
        <taxon>Eukaryota</taxon>
        <taxon>Metazoa</taxon>
        <taxon>Chordata</taxon>
        <taxon>Craniata</taxon>
        <taxon>Vertebrata</taxon>
        <taxon>Euteleostomi</taxon>
        <taxon>Mammalia</taxon>
        <taxon>Eutheria</taxon>
        <taxon>Laurasiatheria</taxon>
        <taxon>Artiodactyla</taxon>
        <taxon>Suina</taxon>
        <taxon>Suidae</taxon>
        <taxon>Sus</taxon>
    </lineage>
</organism>
<accession>P05027</accession>
<proteinExistence type="evidence at protein level"/>
<dbReference type="EMBL" id="X03937">
    <property type="protein sequence ID" value="CAA27575.1"/>
    <property type="molecule type" value="mRNA"/>
</dbReference>
<dbReference type="EMBL" id="X04635">
    <property type="protein sequence ID" value="CAA28301.1"/>
    <property type="molecule type" value="mRNA"/>
</dbReference>
<dbReference type="EMBL" id="M38313">
    <property type="protein sequence ID" value="AAA31001.1"/>
    <property type="molecule type" value="mRNA"/>
</dbReference>
<dbReference type="PIR" id="A24862">
    <property type="entry name" value="A24862"/>
</dbReference>
<dbReference type="PIR" id="I46571">
    <property type="entry name" value="I46571"/>
</dbReference>
<dbReference type="PIR" id="I47125">
    <property type="entry name" value="I47125"/>
</dbReference>
<dbReference type="RefSeq" id="NP_001001542.1">
    <property type="nucleotide sequence ID" value="NM_001001542.1"/>
</dbReference>
<dbReference type="RefSeq" id="XP_013852243.1">
    <property type="nucleotide sequence ID" value="XM_013996789.1"/>
</dbReference>
<dbReference type="PDB" id="3B8E">
    <property type="method" value="X-ray"/>
    <property type="resolution" value="3.50 A"/>
    <property type="chains" value="B/D=28-73"/>
</dbReference>
<dbReference type="PDB" id="3KDP">
    <property type="method" value="X-ray"/>
    <property type="resolution" value="3.50 A"/>
    <property type="chains" value="B/D=18-303"/>
</dbReference>
<dbReference type="PDB" id="3N23">
    <property type="method" value="X-ray"/>
    <property type="resolution" value="4.60 A"/>
    <property type="chains" value="B/D=27-303"/>
</dbReference>
<dbReference type="PDB" id="3WGU">
    <property type="method" value="X-ray"/>
    <property type="resolution" value="2.80 A"/>
    <property type="chains" value="B/D=1-303"/>
</dbReference>
<dbReference type="PDB" id="3WGV">
    <property type="method" value="X-ray"/>
    <property type="resolution" value="2.80 A"/>
    <property type="chains" value="B/D=1-303"/>
</dbReference>
<dbReference type="PDB" id="4HQJ">
    <property type="method" value="X-ray"/>
    <property type="resolution" value="4.30 A"/>
    <property type="chains" value="B/D=1-303"/>
</dbReference>
<dbReference type="PDB" id="4HYT">
    <property type="method" value="X-ray"/>
    <property type="resolution" value="3.40 A"/>
    <property type="chains" value="B/D=1-303"/>
</dbReference>
<dbReference type="PDB" id="4RES">
    <property type="method" value="X-ray"/>
    <property type="resolution" value="3.41 A"/>
    <property type="chains" value="B/D=1-303"/>
</dbReference>
<dbReference type="PDB" id="4RET">
    <property type="method" value="X-ray"/>
    <property type="resolution" value="4.00 A"/>
    <property type="chains" value="B/D=1-303"/>
</dbReference>
<dbReference type="PDB" id="7D91">
    <property type="method" value="X-ray"/>
    <property type="resolution" value="3.35 A"/>
    <property type="chains" value="B=1-303"/>
</dbReference>
<dbReference type="PDB" id="7D92">
    <property type="method" value="X-ray"/>
    <property type="resolution" value="3.90 A"/>
    <property type="chains" value="B=1-303"/>
</dbReference>
<dbReference type="PDB" id="7D93">
    <property type="method" value="X-ray"/>
    <property type="resolution" value="3.65 A"/>
    <property type="chains" value="B/D=1-303"/>
</dbReference>
<dbReference type="PDB" id="7D94">
    <property type="method" value="X-ray"/>
    <property type="resolution" value="3.50 A"/>
    <property type="chains" value="B/D=1-303"/>
</dbReference>
<dbReference type="PDB" id="7DDF">
    <property type="method" value="X-ray"/>
    <property type="resolution" value="4.62 A"/>
    <property type="chains" value="B/D=1-303"/>
</dbReference>
<dbReference type="PDB" id="7DDH">
    <property type="method" value="X-ray"/>
    <property type="resolution" value="3.46 A"/>
    <property type="chains" value="B/D=1-303"/>
</dbReference>
<dbReference type="PDB" id="7DDI">
    <property type="method" value="X-ray"/>
    <property type="resolution" value="3.72 A"/>
    <property type="chains" value="B/D=1-303"/>
</dbReference>
<dbReference type="PDB" id="7DDK">
    <property type="method" value="X-ray"/>
    <property type="resolution" value="3.50 A"/>
    <property type="chains" value="B/D=1-303"/>
</dbReference>
<dbReference type="PDB" id="7DDL">
    <property type="method" value="X-ray"/>
    <property type="resolution" value="3.20 A"/>
    <property type="chains" value="B/D=1-303"/>
</dbReference>
<dbReference type="PDB" id="7QTV">
    <property type="method" value="X-ray"/>
    <property type="resolution" value="4.05 A"/>
    <property type="chains" value="B/D=1-303"/>
</dbReference>
<dbReference type="PDB" id="7WYS">
    <property type="method" value="X-ray"/>
    <property type="resolution" value="3.71 A"/>
    <property type="chains" value="B/D=1-303"/>
</dbReference>
<dbReference type="PDB" id="7WYT">
    <property type="method" value="X-ray"/>
    <property type="resolution" value="2.90 A"/>
    <property type="chains" value="B/D=1-303"/>
</dbReference>
<dbReference type="PDB" id="7YZR">
    <property type="method" value="X-ray"/>
    <property type="resolution" value="6.92 A"/>
    <property type="chains" value="B/D=2-303"/>
</dbReference>
<dbReference type="PDB" id="7Z04">
    <property type="method" value="X-ray"/>
    <property type="resolution" value="7.50 A"/>
    <property type="chains" value="B/D=2-303"/>
</dbReference>
<dbReference type="PDB" id="8JBK">
    <property type="method" value="X-ray"/>
    <property type="resolution" value="2.80 A"/>
    <property type="chains" value="B/D=1-303"/>
</dbReference>
<dbReference type="PDB" id="8JBL">
    <property type="method" value="X-ray"/>
    <property type="resolution" value="3.00 A"/>
    <property type="chains" value="B/D=1-303"/>
</dbReference>
<dbReference type="PDB" id="8JBM">
    <property type="method" value="X-ray"/>
    <property type="resolution" value="2.90 A"/>
    <property type="chains" value="B/D=1-303"/>
</dbReference>
<dbReference type="PDBsum" id="3B8E"/>
<dbReference type="PDBsum" id="3KDP"/>
<dbReference type="PDBsum" id="3N23"/>
<dbReference type="PDBsum" id="3WGU"/>
<dbReference type="PDBsum" id="3WGV"/>
<dbReference type="PDBsum" id="4HQJ"/>
<dbReference type="PDBsum" id="4HYT"/>
<dbReference type="PDBsum" id="4RES"/>
<dbReference type="PDBsum" id="4RET"/>
<dbReference type="PDBsum" id="7D91"/>
<dbReference type="PDBsum" id="7D92"/>
<dbReference type="PDBsum" id="7D93"/>
<dbReference type="PDBsum" id="7D94"/>
<dbReference type="PDBsum" id="7DDF"/>
<dbReference type="PDBsum" id="7DDH"/>
<dbReference type="PDBsum" id="7DDI"/>
<dbReference type="PDBsum" id="7DDK"/>
<dbReference type="PDBsum" id="7DDL"/>
<dbReference type="PDBsum" id="7QTV"/>
<dbReference type="PDBsum" id="7WYS"/>
<dbReference type="PDBsum" id="7WYT"/>
<dbReference type="PDBsum" id="7YZR"/>
<dbReference type="PDBsum" id="7Z04"/>
<dbReference type="PDBsum" id="8JBK"/>
<dbReference type="PDBsum" id="8JBL"/>
<dbReference type="PDBsum" id="8JBM"/>
<dbReference type="EMDB" id="EMD-1831"/>
<dbReference type="SMR" id="P05027"/>
<dbReference type="ComplexPortal" id="CPX-57">
    <property type="entry name" value="Sodium:potassium-exchanging ATPase complex, FXYD2 variant"/>
</dbReference>
<dbReference type="CORUM" id="P05027"/>
<dbReference type="DIP" id="DIP-60366N"/>
<dbReference type="FunCoup" id="P05027">
    <property type="interactions" value="547"/>
</dbReference>
<dbReference type="IntAct" id="P05027">
    <property type="interactions" value="1"/>
</dbReference>
<dbReference type="STRING" id="9823.ENSSSCP00000043160"/>
<dbReference type="ChEMBL" id="CHEMBL4524015"/>
<dbReference type="GlyCosmos" id="P05027">
    <property type="glycosylation" value="3 sites, No reported glycans"/>
</dbReference>
<dbReference type="GlyGen" id="P05027">
    <property type="glycosylation" value="3 sites"/>
</dbReference>
<dbReference type="PaxDb" id="9823-ENSSSCP00000006713"/>
<dbReference type="PeptideAtlas" id="P05027"/>
<dbReference type="Ensembl" id="ENSSSCT00000006901.5">
    <property type="protein sequence ID" value="ENSSSCP00000006713.3"/>
    <property type="gene ID" value="ENSSSCG00000006296.5"/>
</dbReference>
<dbReference type="Ensembl" id="ENSSSCT00025071802.1">
    <property type="protein sequence ID" value="ENSSSCP00025031098.1"/>
    <property type="gene ID" value="ENSSSCG00025052482.1"/>
</dbReference>
<dbReference type="Ensembl" id="ENSSSCT00035086630.1">
    <property type="protein sequence ID" value="ENSSSCP00035036104.1"/>
    <property type="gene ID" value="ENSSSCG00035064350.1"/>
</dbReference>
<dbReference type="Ensembl" id="ENSSSCT00045067159.1">
    <property type="protein sequence ID" value="ENSSSCP00045047697.1"/>
    <property type="gene ID" value="ENSSSCG00045038671.1"/>
</dbReference>
<dbReference type="Ensembl" id="ENSSSCT00055021364.1">
    <property type="protein sequence ID" value="ENSSSCP00055016922.1"/>
    <property type="gene ID" value="ENSSSCG00055010846.1"/>
</dbReference>
<dbReference type="Ensembl" id="ENSSSCT00070042092.1">
    <property type="protein sequence ID" value="ENSSSCP00070035369.1"/>
    <property type="gene ID" value="ENSSSCG00070021088.1"/>
</dbReference>
<dbReference type="Ensembl" id="ENSSSCT00070042253.1">
    <property type="protein sequence ID" value="ENSSSCP00070035513.1"/>
    <property type="gene ID" value="ENSSSCG00070021088.1"/>
</dbReference>
<dbReference type="Ensembl" id="ENSSSCT00070042300.1">
    <property type="protein sequence ID" value="ENSSSCP00070035557.1"/>
    <property type="gene ID" value="ENSSSCG00070021088.1"/>
</dbReference>
<dbReference type="Ensembl" id="ENSSSCT00090027594">
    <property type="protein sequence ID" value="ENSSSCP00090017024"/>
    <property type="gene ID" value="ENSSSCG00090015681"/>
</dbReference>
<dbReference type="Ensembl" id="ENSSSCT00105003859">
    <property type="protein sequence ID" value="ENSSSCP00105002847"/>
    <property type="gene ID" value="ENSSSCG00105001987"/>
</dbReference>
<dbReference type="Ensembl" id="ENSSSCT00110023124">
    <property type="protein sequence ID" value="ENSSSCP00110015735"/>
    <property type="gene ID" value="ENSSSCG00110011980"/>
</dbReference>
<dbReference type="Ensembl" id="ENSSSCT00115021498">
    <property type="protein sequence ID" value="ENSSSCP00115020360"/>
    <property type="gene ID" value="ENSSSCG00115012426"/>
</dbReference>
<dbReference type="Ensembl" id="ENSSSCT00130019278">
    <property type="protein sequence ID" value="ENSSSCP00130013114"/>
    <property type="gene ID" value="ENSSSCG00130010247"/>
</dbReference>
<dbReference type="GeneID" id="396898"/>
<dbReference type="KEGG" id="ssc:396898"/>
<dbReference type="CTD" id="481"/>
<dbReference type="VGNC" id="VGNC:85642">
    <property type="gene designation" value="ATP1B1"/>
</dbReference>
<dbReference type="eggNOG" id="KOG3927">
    <property type="taxonomic scope" value="Eukaryota"/>
</dbReference>
<dbReference type="GeneTree" id="ENSGT01030000234579"/>
<dbReference type="HOGENOM" id="CLU_057702_2_0_1"/>
<dbReference type="InParanoid" id="P05027"/>
<dbReference type="OMA" id="WEGFRVF"/>
<dbReference type="OrthoDB" id="5912413at2759"/>
<dbReference type="BRENDA" id="7.2.2.13">
    <property type="organism ID" value="6170"/>
</dbReference>
<dbReference type="Reactome" id="R-SSC-210991">
    <property type="pathway name" value="Basigin interactions"/>
</dbReference>
<dbReference type="Reactome" id="R-SSC-5578775">
    <property type="pathway name" value="Ion homeostasis"/>
</dbReference>
<dbReference type="Reactome" id="R-SSC-936837">
    <property type="pathway name" value="Ion transport by P-type ATPases"/>
</dbReference>
<dbReference type="EvolutionaryTrace" id="P05027"/>
<dbReference type="Proteomes" id="UP000008227">
    <property type="component" value="Chromosome 4"/>
</dbReference>
<dbReference type="Proteomes" id="UP000314985">
    <property type="component" value="Chromosome 4"/>
</dbReference>
<dbReference type="Proteomes" id="UP000694570">
    <property type="component" value="Unplaced"/>
</dbReference>
<dbReference type="Proteomes" id="UP000694571">
    <property type="component" value="Unplaced"/>
</dbReference>
<dbReference type="Proteomes" id="UP000694720">
    <property type="component" value="Unplaced"/>
</dbReference>
<dbReference type="Proteomes" id="UP000694722">
    <property type="component" value="Unplaced"/>
</dbReference>
<dbReference type="Proteomes" id="UP000694723">
    <property type="component" value="Unplaced"/>
</dbReference>
<dbReference type="Proteomes" id="UP000694724">
    <property type="component" value="Unplaced"/>
</dbReference>
<dbReference type="Proteomes" id="UP000694725">
    <property type="component" value="Unplaced"/>
</dbReference>
<dbReference type="Proteomes" id="UP000694726">
    <property type="component" value="Unplaced"/>
</dbReference>
<dbReference type="Proteomes" id="UP000694727">
    <property type="component" value="Unplaced"/>
</dbReference>
<dbReference type="Proteomes" id="UP000694728">
    <property type="component" value="Unplaced"/>
</dbReference>
<dbReference type="Bgee" id="ENSSSCG00000006296">
    <property type="expression patterns" value="Expressed in Ammon's horn and 43 other cell types or tissues"/>
</dbReference>
<dbReference type="ExpressionAtlas" id="P05027">
    <property type="expression patterns" value="baseline and differential"/>
</dbReference>
<dbReference type="GO" id="GO:0016324">
    <property type="term" value="C:apical plasma membrane"/>
    <property type="evidence" value="ECO:0000250"/>
    <property type="project" value="UniProtKB"/>
</dbReference>
<dbReference type="GO" id="GO:0016323">
    <property type="term" value="C:basolateral plasma membrane"/>
    <property type="evidence" value="ECO:0007669"/>
    <property type="project" value="Ensembl"/>
</dbReference>
<dbReference type="GO" id="GO:0014704">
    <property type="term" value="C:intercalated disc"/>
    <property type="evidence" value="ECO:0007669"/>
    <property type="project" value="Ensembl"/>
</dbReference>
<dbReference type="GO" id="GO:0016328">
    <property type="term" value="C:lateral plasma membrane"/>
    <property type="evidence" value="ECO:0007669"/>
    <property type="project" value="Ensembl"/>
</dbReference>
<dbReference type="GO" id="GO:0031090">
    <property type="term" value="C:organelle membrane"/>
    <property type="evidence" value="ECO:0007669"/>
    <property type="project" value="Ensembl"/>
</dbReference>
<dbReference type="GO" id="GO:0005890">
    <property type="term" value="C:sodium:potassium-exchanging ATPase complex"/>
    <property type="evidence" value="ECO:0000314"/>
    <property type="project" value="BHF-UCL"/>
</dbReference>
<dbReference type="GO" id="GO:0036126">
    <property type="term" value="C:sperm flagellum"/>
    <property type="evidence" value="ECO:0007669"/>
    <property type="project" value="Ensembl"/>
</dbReference>
<dbReference type="GO" id="GO:0030315">
    <property type="term" value="C:T-tubule"/>
    <property type="evidence" value="ECO:0007669"/>
    <property type="project" value="Ensembl"/>
</dbReference>
<dbReference type="GO" id="GO:0001671">
    <property type="term" value="F:ATPase activator activity"/>
    <property type="evidence" value="ECO:0000314"/>
    <property type="project" value="BHF-UCL"/>
</dbReference>
<dbReference type="GO" id="GO:0051117">
    <property type="term" value="F:ATPase binding"/>
    <property type="evidence" value="ECO:0000353"/>
    <property type="project" value="BHF-UCL"/>
</dbReference>
<dbReference type="GO" id="GO:0005391">
    <property type="term" value="F:P-type sodium:potassium-exchanging transporter activity"/>
    <property type="evidence" value="ECO:0000314"/>
    <property type="project" value="BHF-UCL"/>
</dbReference>
<dbReference type="GO" id="GO:0019901">
    <property type="term" value="F:protein kinase binding"/>
    <property type="evidence" value="ECO:0007669"/>
    <property type="project" value="Ensembl"/>
</dbReference>
<dbReference type="GO" id="GO:0030674">
    <property type="term" value="F:protein-macromolecule adaptor activity"/>
    <property type="evidence" value="ECO:0000314"/>
    <property type="project" value="BHF-UCL"/>
</dbReference>
<dbReference type="GO" id="GO:0141109">
    <property type="term" value="F:transporter activator activity"/>
    <property type="evidence" value="ECO:0000314"/>
    <property type="project" value="ARUK-UCL"/>
</dbReference>
<dbReference type="GO" id="GO:0046034">
    <property type="term" value="P:ATP metabolic process"/>
    <property type="evidence" value="ECO:0007669"/>
    <property type="project" value="Ensembl"/>
</dbReference>
<dbReference type="GO" id="GO:0060048">
    <property type="term" value="P:cardiac muscle contraction"/>
    <property type="evidence" value="ECO:0007669"/>
    <property type="project" value="Ensembl"/>
</dbReference>
<dbReference type="GO" id="GO:0007155">
    <property type="term" value="P:cell adhesion"/>
    <property type="evidence" value="ECO:0007669"/>
    <property type="project" value="UniProtKB-KW"/>
</dbReference>
<dbReference type="GO" id="GO:0010248">
    <property type="term" value="P:establishment or maintenance of transmembrane electrochemical gradient"/>
    <property type="evidence" value="ECO:0000303"/>
    <property type="project" value="ComplexPortal"/>
</dbReference>
<dbReference type="GO" id="GO:0045087">
    <property type="term" value="P:innate immune response"/>
    <property type="evidence" value="ECO:0007669"/>
    <property type="project" value="UniProtKB-KW"/>
</dbReference>
<dbReference type="GO" id="GO:0006874">
    <property type="term" value="P:intracellular calcium ion homeostasis"/>
    <property type="evidence" value="ECO:0007669"/>
    <property type="project" value="Ensembl"/>
</dbReference>
<dbReference type="GO" id="GO:0030007">
    <property type="term" value="P:intracellular potassium ion homeostasis"/>
    <property type="evidence" value="ECO:0000314"/>
    <property type="project" value="BHF-UCL"/>
</dbReference>
<dbReference type="GO" id="GO:0006883">
    <property type="term" value="P:intracellular sodium ion homeostasis"/>
    <property type="evidence" value="ECO:0000314"/>
    <property type="project" value="BHF-UCL"/>
</dbReference>
<dbReference type="GO" id="GO:0086009">
    <property type="term" value="P:membrane repolarization"/>
    <property type="evidence" value="ECO:0000314"/>
    <property type="project" value="BHF-UCL"/>
</dbReference>
<dbReference type="GO" id="GO:1903288">
    <property type="term" value="P:positive regulation of potassium ion import across plasma membrane"/>
    <property type="evidence" value="ECO:0000314"/>
    <property type="project" value="BHF-UCL"/>
</dbReference>
<dbReference type="GO" id="GO:1901381">
    <property type="term" value="P:positive regulation of potassium ion transmembrane transport"/>
    <property type="evidence" value="ECO:0000316"/>
    <property type="project" value="ARUK-UCL"/>
</dbReference>
<dbReference type="GO" id="GO:1903278">
    <property type="term" value="P:positive regulation of sodium ion export across plasma membrane"/>
    <property type="evidence" value="ECO:0000314"/>
    <property type="project" value="BHF-UCL"/>
</dbReference>
<dbReference type="GO" id="GO:1902307">
    <property type="term" value="P:positive regulation of sodium ion transmembrane transport"/>
    <property type="evidence" value="ECO:0000316"/>
    <property type="project" value="ARUK-UCL"/>
</dbReference>
<dbReference type="GO" id="GO:1990573">
    <property type="term" value="P:potassium ion import across plasma membrane"/>
    <property type="evidence" value="ECO:0000314"/>
    <property type="project" value="BHF-UCL"/>
</dbReference>
<dbReference type="GO" id="GO:0072659">
    <property type="term" value="P:protein localization to plasma membrane"/>
    <property type="evidence" value="ECO:0007669"/>
    <property type="project" value="Ensembl"/>
</dbReference>
<dbReference type="GO" id="GO:0050821">
    <property type="term" value="P:protein stabilization"/>
    <property type="evidence" value="ECO:0007669"/>
    <property type="project" value="Ensembl"/>
</dbReference>
<dbReference type="GO" id="GO:1902600">
    <property type="term" value="P:proton transmembrane transport"/>
    <property type="evidence" value="ECO:0000303"/>
    <property type="project" value="ComplexPortal"/>
</dbReference>
<dbReference type="GO" id="GO:1903169">
    <property type="term" value="P:regulation of calcium ion transmembrane transport"/>
    <property type="evidence" value="ECO:0007669"/>
    <property type="project" value="Ensembl"/>
</dbReference>
<dbReference type="GO" id="GO:0010882">
    <property type="term" value="P:regulation of cardiac muscle contraction by calcium ion signaling"/>
    <property type="evidence" value="ECO:0007669"/>
    <property type="project" value="Ensembl"/>
</dbReference>
<dbReference type="GO" id="GO:0010468">
    <property type="term" value="P:regulation of gene expression"/>
    <property type="evidence" value="ECO:0007669"/>
    <property type="project" value="Ensembl"/>
</dbReference>
<dbReference type="GO" id="GO:0055119">
    <property type="term" value="P:relaxation of cardiac muscle"/>
    <property type="evidence" value="ECO:0007669"/>
    <property type="project" value="Ensembl"/>
</dbReference>
<dbReference type="GO" id="GO:0036376">
    <property type="term" value="P:sodium ion export across plasma membrane"/>
    <property type="evidence" value="ECO:0000314"/>
    <property type="project" value="BHF-UCL"/>
</dbReference>
<dbReference type="GO" id="GO:0055085">
    <property type="term" value="P:transmembrane transport"/>
    <property type="evidence" value="ECO:0000314"/>
    <property type="project" value="BHF-UCL"/>
</dbReference>
<dbReference type="FunFam" id="1.20.5.170:FF:000062">
    <property type="entry name" value="Sodium/potassium-transporting ATPase subunit beta"/>
    <property type="match status" value="1"/>
</dbReference>
<dbReference type="FunFam" id="2.60.40.1660:FF:000002">
    <property type="entry name" value="Sodium/potassium-transporting ATPase subunit beta"/>
    <property type="match status" value="1"/>
</dbReference>
<dbReference type="Gene3D" id="2.60.40.1660">
    <property type="entry name" value="Na, k-atpase alpha subunit"/>
    <property type="match status" value="1"/>
</dbReference>
<dbReference type="InterPro" id="IPR000402">
    <property type="entry name" value="Na/K_ATPase_sub_beta"/>
</dbReference>
<dbReference type="InterPro" id="IPR038702">
    <property type="entry name" value="Na/K_ATPase_sub_beta_sf"/>
</dbReference>
<dbReference type="NCBIfam" id="TIGR01107">
    <property type="entry name" value="Na_K_ATPase_bet"/>
    <property type="match status" value="1"/>
</dbReference>
<dbReference type="PANTHER" id="PTHR11523">
    <property type="entry name" value="SODIUM/POTASSIUM-DEPENDENT ATPASE BETA SUBUNIT"/>
    <property type="match status" value="1"/>
</dbReference>
<dbReference type="PANTHER" id="PTHR11523:SF10">
    <property type="entry name" value="SODIUM_POTASSIUM-TRANSPORTING ATPASE SUBUNIT BETA-1"/>
    <property type="match status" value="1"/>
</dbReference>
<dbReference type="Pfam" id="PF00287">
    <property type="entry name" value="Na_K-ATPase"/>
    <property type="match status" value="1"/>
</dbReference>
<dbReference type="PROSITE" id="PS00390">
    <property type="entry name" value="ATPASE_NA_K_BETA_1"/>
    <property type="match status" value="1"/>
</dbReference>
<dbReference type="PROSITE" id="PS00391">
    <property type="entry name" value="ATPASE_NA_K_BETA_2"/>
    <property type="match status" value="1"/>
</dbReference>